<accession>B0K4D7</accession>
<dbReference type="EC" id="6.3.4.16" evidence="1"/>
<dbReference type="EC" id="6.3.5.5" evidence="1"/>
<dbReference type="EMBL" id="CP000923">
    <property type="protein sequence ID" value="ABY91970.1"/>
    <property type="molecule type" value="Genomic_DNA"/>
</dbReference>
<dbReference type="RefSeq" id="WP_009052165.1">
    <property type="nucleotide sequence ID" value="NC_010320.1"/>
</dbReference>
<dbReference type="SMR" id="B0K4D7"/>
<dbReference type="KEGG" id="tex:Teth514_0662"/>
<dbReference type="HOGENOM" id="CLU_000513_1_2_9"/>
<dbReference type="UniPathway" id="UPA00068">
    <property type="reaction ID" value="UER00171"/>
</dbReference>
<dbReference type="UniPathway" id="UPA00070">
    <property type="reaction ID" value="UER00115"/>
</dbReference>
<dbReference type="Proteomes" id="UP000002155">
    <property type="component" value="Chromosome"/>
</dbReference>
<dbReference type="GO" id="GO:0005737">
    <property type="term" value="C:cytoplasm"/>
    <property type="evidence" value="ECO:0007669"/>
    <property type="project" value="TreeGrafter"/>
</dbReference>
<dbReference type="GO" id="GO:0005524">
    <property type="term" value="F:ATP binding"/>
    <property type="evidence" value="ECO:0007669"/>
    <property type="project" value="UniProtKB-UniRule"/>
</dbReference>
<dbReference type="GO" id="GO:0004087">
    <property type="term" value="F:carbamoyl-phosphate synthase (ammonia) activity"/>
    <property type="evidence" value="ECO:0007669"/>
    <property type="project" value="RHEA"/>
</dbReference>
<dbReference type="GO" id="GO:0004088">
    <property type="term" value="F:carbamoyl-phosphate synthase (glutamine-hydrolyzing) activity"/>
    <property type="evidence" value="ECO:0007669"/>
    <property type="project" value="UniProtKB-UniRule"/>
</dbReference>
<dbReference type="GO" id="GO:0046872">
    <property type="term" value="F:metal ion binding"/>
    <property type="evidence" value="ECO:0007669"/>
    <property type="project" value="UniProtKB-KW"/>
</dbReference>
<dbReference type="GO" id="GO:0044205">
    <property type="term" value="P:'de novo' UMP biosynthetic process"/>
    <property type="evidence" value="ECO:0007669"/>
    <property type="project" value="UniProtKB-UniRule"/>
</dbReference>
<dbReference type="GO" id="GO:0006541">
    <property type="term" value="P:glutamine metabolic process"/>
    <property type="evidence" value="ECO:0007669"/>
    <property type="project" value="TreeGrafter"/>
</dbReference>
<dbReference type="GO" id="GO:0006526">
    <property type="term" value="P:L-arginine biosynthetic process"/>
    <property type="evidence" value="ECO:0007669"/>
    <property type="project" value="UniProtKB-UniRule"/>
</dbReference>
<dbReference type="CDD" id="cd01424">
    <property type="entry name" value="MGS_CPS_II"/>
    <property type="match status" value="1"/>
</dbReference>
<dbReference type="FunFam" id="1.10.1030.10:FF:000002">
    <property type="entry name" value="Carbamoyl-phosphate synthase large chain"/>
    <property type="match status" value="1"/>
</dbReference>
<dbReference type="FunFam" id="3.30.470.20:FF:000001">
    <property type="entry name" value="Carbamoyl-phosphate synthase large chain"/>
    <property type="match status" value="1"/>
</dbReference>
<dbReference type="FunFam" id="3.30.470.20:FF:000026">
    <property type="entry name" value="Carbamoyl-phosphate synthase large chain"/>
    <property type="match status" value="1"/>
</dbReference>
<dbReference type="FunFam" id="3.40.50.20:FF:000001">
    <property type="entry name" value="Carbamoyl-phosphate synthase large chain"/>
    <property type="match status" value="1"/>
</dbReference>
<dbReference type="FunFam" id="3.40.50.20:FF:000002">
    <property type="entry name" value="Carbamoyl-phosphate synthase large chain"/>
    <property type="match status" value="1"/>
</dbReference>
<dbReference type="Gene3D" id="3.40.50.20">
    <property type="match status" value="2"/>
</dbReference>
<dbReference type="Gene3D" id="3.30.1490.20">
    <property type="entry name" value="ATP-grasp fold, A domain"/>
    <property type="match status" value="1"/>
</dbReference>
<dbReference type="Gene3D" id="3.30.470.20">
    <property type="entry name" value="ATP-grasp fold, B domain"/>
    <property type="match status" value="2"/>
</dbReference>
<dbReference type="Gene3D" id="1.10.1030.10">
    <property type="entry name" value="Carbamoyl-phosphate synthetase, large subunit oligomerisation domain"/>
    <property type="match status" value="1"/>
</dbReference>
<dbReference type="Gene3D" id="3.40.50.1380">
    <property type="entry name" value="Methylglyoxal synthase-like domain"/>
    <property type="match status" value="1"/>
</dbReference>
<dbReference type="HAMAP" id="MF_01210_A">
    <property type="entry name" value="CPSase_L_chain_A"/>
    <property type="match status" value="1"/>
</dbReference>
<dbReference type="HAMAP" id="MF_01210_B">
    <property type="entry name" value="CPSase_L_chain_B"/>
    <property type="match status" value="1"/>
</dbReference>
<dbReference type="InterPro" id="IPR011761">
    <property type="entry name" value="ATP-grasp"/>
</dbReference>
<dbReference type="InterPro" id="IPR013815">
    <property type="entry name" value="ATP_grasp_subdomain_1"/>
</dbReference>
<dbReference type="InterPro" id="IPR006275">
    <property type="entry name" value="CarbamoylP_synth_lsu"/>
</dbReference>
<dbReference type="InterPro" id="IPR005480">
    <property type="entry name" value="CarbamoylP_synth_lsu_oligo"/>
</dbReference>
<dbReference type="InterPro" id="IPR036897">
    <property type="entry name" value="CarbamoylP_synth_lsu_oligo_sf"/>
</dbReference>
<dbReference type="InterPro" id="IPR005479">
    <property type="entry name" value="CbamoylP_synth_lsu-like_ATP-bd"/>
</dbReference>
<dbReference type="InterPro" id="IPR005483">
    <property type="entry name" value="CbamoylP_synth_lsu_CPSase_dom"/>
</dbReference>
<dbReference type="InterPro" id="IPR011607">
    <property type="entry name" value="MGS-like_dom"/>
</dbReference>
<dbReference type="InterPro" id="IPR036914">
    <property type="entry name" value="MGS-like_dom_sf"/>
</dbReference>
<dbReference type="InterPro" id="IPR033937">
    <property type="entry name" value="MGS_CPS_CarB"/>
</dbReference>
<dbReference type="InterPro" id="IPR016185">
    <property type="entry name" value="PreATP-grasp_dom_sf"/>
</dbReference>
<dbReference type="NCBIfam" id="TIGR01369">
    <property type="entry name" value="CPSaseII_lrg"/>
    <property type="match status" value="1"/>
</dbReference>
<dbReference type="NCBIfam" id="NF003671">
    <property type="entry name" value="PRK05294.1"/>
    <property type="match status" value="1"/>
</dbReference>
<dbReference type="NCBIfam" id="NF009455">
    <property type="entry name" value="PRK12815.1"/>
    <property type="match status" value="1"/>
</dbReference>
<dbReference type="PANTHER" id="PTHR11405:SF53">
    <property type="entry name" value="CARBAMOYL-PHOSPHATE SYNTHASE [AMMONIA], MITOCHONDRIAL"/>
    <property type="match status" value="1"/>
</dbReference>
<dbReference type="PANTHER" id="PTHR11405">
    <property type="entry name" value="CARBAMOYLTRANSFERASE FAMILY MEMBER"/>
    <property type="match status" value="1"/>
</dbReference>
<dbReference type="Pfam" id="PF02786">
    <property type="entry name" value="CPSase_L_D2"/>
    <property type="match status" value="2"/>
</dbReference>
<dbReference type="Pfam" id="PF02787">
    <property type="entry name" value="CPSase_L_D3"/>
    <property type="match status" value="1"/>
</dbReference>
<dbReference type="Pfam" id="PF02142">
    <property type="entry name" value="MGS"/>
    <property type="match status" value="1"/>
</dbReference>
<dbReference type="PRINTS" id="PR00098">
    <property type="entry name" value="CPSASE"/>
</dbReference>
<dbReference type="SMART" id="SM01096">
    <property type="entry name" value="CPSase_L_D3"/>
    <property type="match status" value="1"/>
</dbReference>
<dbReference type="SMART" id="SM00851">
    <property type="entry name" value="MGS"/>
    <property type="match status" value="1"/>
</dbReference>
<dbReference type="SUPFAM" id="SSF48108">
    <property type="entry name" value="Carbamoyl phosphate synthetase, large subunit connection domain"/>
    <property type="match status" value="1"/>
</dbReference>
<dbReference type="SUPFAM" id="SSF56059">
    <property type="entry name" value="Glutathione synthetase ATP-binding domain-like"/>
    <property type="match status" value="2"/>
</dbReference>
<dbReference type="SUPFAM" id="SSF52335">
    <property type="entry name" value="Methylglyoxal synthase-like"/>
    <property type="match status" value="1"/>
</dbReference>
<dbReference type="SUPFAM" id="SSF52440">
    <property type="entry name" value="PreATP-grasp domain"/>
    <property type="match status" value="2"/>
</dbReference>
<dbReference type="PROSITE" id="PS50975">
    <property type="entry name" value="ATP_GRASP"/>
    <property type="match status" value="2"/>
</dbReference>
<dbReference type="PROSITE" id="PS00866">
    <property type="entry name" value="CPSASE_1"/>
    <property type="match status" value="1"/>
</dbReference>
<dbReference type="PROSITE" id="PS00867">
    <property type="entry name" value="CPSASE_2"/>
    <property type="match status" value="2"/>
</dbReference>
<dbReference type="PROSITE" id="PS51855">
    <property type="entry name" value="MGS"/>
    <property type="match status" value="1"/>
</dbReference>
<evidence type="ECO:0000255" key="1">
    <source>
        <dbReference type="HAMAP-Rule" id="MF_01210"/>
    </source>
</evidence>
<comment type="function">
    <text evidence="1">Large subunit of the glutamine-dependent carbamoyl phosphate synthetase (CPSase). CPSase catalyzes the formation of carbamoyl phosphate from the ammonia moiety of glutamine, carbonate, and phosphate donated by ATP, constituting the first step of 2 biosynthetic pathways, one leading to arginine and/or urea and the other to pyrimidine nucleotides. The large subunit (synthetase) binds the substrates ammonia (free or transferred from glutamine from the small subunit), hydrogencarbonate and ATP and carries out an ATP-coupled ligase reaction, activating hydrogencarbonate by forming carboxy phosphate which reacts with ammonia to form carbamoyl phosphate.</text>
</comment>
<comment type="catalytic activity">
    <reaction evidence="1">
        <text>hydrogencarbonate + L-glutamine + 2 ATP + H2O = carbamoyl phosphate + L-glutamate + 2 ADP + phosphate + 2 H(+)</text>
        <dbReference type="Rhea" id="RHEA:18633"/>
        <dbReference type="ChEBI" id="CHEBI:15377"/>
        <dbReference type="ChEBI" id="CHEBI:15378"/>
        <dbReference type="ChEBI" id="CHEBI:17544"/>
        <dbReference type="ChEBI" id="CHEBI:29985"/>
        <dbReference type="ChEBI" id="CHEBI:30616"/>
        <dbReference type="ChEBI" id="CHEBI:43474"/>
        <dbReference type="ChEBI" id="CHEBI:58228"/>
        <dbReference type="ChEBI" id="CHEBI:58359"/>
        <dbReference type="ChEBI" id="CHEBI:456216"/>
        <dbReference type="EC" id="6.3.5.5"/>
    </reaction>
</comment>
<comment type="catalytic activity">
    <molecule>Carbamoyl phosphate synthase large chain</molecule>
    <reaction evidence="1">
        <text>hydrogencarbonate + NH4(+) + 2 ATP = carbamoyl phosphate + 2 ADP + phosphate + 2 H(+)</text>
        <dbReference type="Rhea" id="RHEA:18029"/>
        <dbReference type="ChEBI" id="CHEBI:15378"/>
        <dbReference type="ChEBI" id="CHEBI:17544"/>
        <dbReference type="ChEBI" id="CHEBI:28938"/>
        <dbReference type="ChEBI" id="CHEBI:30616"/>
        <dbReference type="ChEBI" id="CHEBI:43474"/>
        <dbReference type="ChEBI" id="CHEBI:58228"/>
        <dbReference type="ChEBI" id="CHEBI:456216"/>
        <dbReference type="EC" id="6.3.4.16"/>
    </reaction>
</comment>
<comment type="cofactor">
    <cofactor evidence="1">
        <name>Mg(2+)</name>
        <dbReference type="ChEBI" id="CHEBI:18420"/>
    </cofactor>
    <cofactor evidence="1">
        <name>Mn(2+)</name>
        <dbReference type="ChEBI" id="CHEBI:29035"/>
    </cofactor>
    <text evidence="1">Binds 4 Mg(2+) or Mn(2+) ions per subunit.</text>
</comment>
<comment type="pathway">
    <text evidence="1">Amino-acid biosynthesis; L-arginine biosynthesis; carbamoyl phosphate from bicarbonate: step 1/1.</text>
</comment>
<comment type="pathway">
    <text evidence="1">Pyrimidine metabolism; UMP biosynthesis via de novo pathway; (S)-dihydroorotate from bicarbonate: step 1/3.</text>
</comment>
<comment type="subunit">
    <text evidence="1">Composed of two chains; the small (or glutamine) chain promotes the hydrolysis of glutamine to ammonia, which is used by the large (or ammonia) chain to synthesize carbamoyl phosphate. Tetramer of heterodimers (alpha,beta)4.</text>
</comment>
<comment type="domain">
    <text evidence="1">The large subunit is composed of 2 ATP-grasp domains that are involved in binding the 2 ATP molecules needed for carbamoyl phosphate synthesis. The N-terminal ATP-grasp domain (referred to as the carboxyphosphate synthetic component) catalyzes the ATP-dependent phosphorylation of hydrogencarbonate to carboxyphosphate and the subsequent nucleophilic attack by ammonia to form a carbamate intermediate. The C-terminal ATP-grasp domain (referred to as the carbamoyl phosphate synthetic component) then catalyzes the phosphorylation of carbamate with the second ATP to form the end product carbamoyl phosphate. The reactive and unstable enzyme intermediates are sequentially channeled from one active site to the next through the interior of the protein over a distance of at least 96 A.</text>
</comment>
<comment type="similarity">
    <text evidence="1">Belongs to the CarB family.</text>
</comment>
<gene>
    <name evidence="1" type="primary">carB</name>
    <name type="ordered locus">Teth514_0662</name>
</gene>
<organism>
    <name type="scientific">Thermoanaerobacter sp. (strain X514)</name>
    <dbReference type="NCBI Taxonomy" id="399726"/>
    <lineage>
        <taxon>Bacteria</taxon>
        <taxon>Bacillati</taxon>
        <taxon>Bacillota</taxon>
        <taxon>Clostridia</taxon>
        <taxon>Thermoanaerobacterales</taxon>
        <taxon>Thermoanaerobacteraceae</taxon>
        <taxon>Thermoanaerobacter</taxon>
    </lineage>
</organism>
<sequence length="1072" mass="119098">MPKYKDINKVLVIGSGPIIIGQAAEFDYSGTQACKSLKEEGLQVVLVNNNPATIMTDTDIADIVYIENPTVCVVEKIIAKEKPDGILATLGGQTGLNLAVKLKEEGILDKYNVKLLGTSFESIKTAEDRKLFKRKMQEIGEPVAESVTVTNIEDALKFAKNYGYPLIIRPAYTLGGTGGGIAHNDEELISIVSLGLKKSMVGEVLVEKSLYGWKEIEFEVMRDADDNCITICSMENFDPVGVHTGDSIVVAPTQTLSDYEYQMLRSASIKIIKALKIEGGCNIQFALDPESHKYYVIEVNPRVSRSSALASKATGYPIAKVAAKIAIGLRLDEIKNPVTGKTTAFFEPALDYVVTKIPRWPFDKFYTTDRKIGTQMKATGEVMAIERSFEASLLKAVRSLEIKAYGLRLNNVKAMKTEEILKGISVPNDMRLFYIAEALRRDIDIDYINEVTKIDKWFLNKLLNIVNMEREIEKNELSEEILKKAKRMGFSDREIATIKGIEEEDVRALRKEYSIYPSYKMVDTCAAEFESVTQYIYSTYGEEDEVEIHEIPKVIVIGSGPIRIGQGIEFDYCSVKALWALRDAGIKSIIINNNPETVSTDFDTGDRLYFEPITLEDVLNIYEKEKPLGVMVMFGGQTAINLTEGLVKNGVKILGTSYESIDISEDREKFSKLLKELNINQPKGDYALTVEDAKDIALKLSFPLLVRPSYVIGGQSMEKVNTLQELIDYVKHATEISPGKPILIDKYIDGREVEIDAVSDGECVLIPGIMEHIERAGVHSGDSFSIYPARNLSEREINTIIEYTERISKALNVKGLINIQFAVKEGTVYVLEVNPRASRTVPIMSKATGVPMVKLAVEVALGKKLKELGYKSGLWPQTPYTVVKAPVFSMEKLTDAEVSLGPEMKSTGEIMGIDLSYEGALYKALEGAGLKIPKKGKILLSIAERDFQEVPSLVEKLQSLGYEIYATYRTGKYLSLMGIHVNVISLDNAIKLLKDGYFDAVINTPTKGKKPDNTGFKLRRTAVEYRIPLFTSMDTIKAALNAVAKVNVNGLSILSINEYEEIQKDNVKNLVL</sequence>
<feature type="chain" id="PRO_1000138904" description="Carbamoyl phosphate synthase large chain">
    <location>
        <begin position="1"/>
        <end position="1072"/>
    </location>
</feature>
<feature type="domain" description="ATP-grasp 1" evidence="1">
    <location>
        <begin position="133"/>
        <end position="327"/>
    </location>
</feature>
<feature type="domain" description="ATP-grasp 2" evidence="1">
    <location>
        <begin position="671"/>
        <end position="861"/>
    </location>
</feature>
<feature type="domain" description="MGS-like" evidence="1">
    <location>
        <begin position="930"/>
        <end position="1072"/>
    </location>
</feature>
<feature type="region of interest" description="Carboxyphosphate synthetic domain" evidence="1">
    <location>
        <begin position="1"/>
        <end position="401"/>
    </location>
</feature>
<feature type="region of interest" description="Oligomerization domain" evidence="1">
    <location>
        <begin position="402"/>
        <end position="544"/>
    </location>
</feature>
<feature type="region of interest" description="Carbamoyl phosphate synthetic domain" evidence="1">
    <location>
        <begin position="545"/>
        <end position="929"/>
    </location>
</feature>
<feature type="region of interest" description="Allosteric domain" evidence="1">
    <location>
        <begin position="930"/>
        <end position="1072"/>
    </location>
</feature>
<feature type="binding site" evidence="1">
    <location>
        <position position="129"/>
    </location>
    <ligand>
        <name>ATP</name>
        <dbReference type="ChEBI" id="CHEBI:30616"/>
        <label>1</label>
    </ligand>
</feature>
<feature type="binding site" evidence="1">
    <location>
        <position position="169"/>
    </location>
    <ligand>
        <name>ATP</name>
        <dbReference type="ChEBI" id="CHEBI:30616"/>
        <label>1</label>
    </ligand>
</feature>
<feature type="binding site" evidence="1">
    <location>
        <position position="175"/>
    </location>
    <ligand>
        <name>ATP</name>
        <dbReference type="ChEBI" id="CHEBI:30616"/>
        <label>1</label>
    </ligand>
</feature>
<feature type="binding site" evidence="1">
    <location>
        <position position="176"/>
    </location>
    <ligand>
        <name>ATP</name>
        <dbReference type="ChEBI" id="CHEBI:30616"/>
        <label>1</label>
    </ligand>
</feature>
<feature type="binding site" evidence="1">
    <location>
        <position position="208"/>
    </location>
    <ligand>
        <name>ATP</name>
        <dbReference type="ChEBI" id="CHEBI:30616"/>
        <label>1</label>
    </ligand>
</feature>
<feature type="binding site" evidence="1">
    <location>
        <position position="210"/>
    </location>
    <ligand>
        <name>ATP</name>
        <dbReference type="ChEBI" id="CHEBI:30616"/>
        <label>1</label>
    </ligand>
</feature>
<feature type="binding site" evidence="1">
    <location>
        <position position="215"/>
    </location>
    <ligand>
        <name>ATP</name>
        <dbReference type="ChEBI" id="CHEBI:30616"/>
        <label>1</label>
    </ligand>
</feature>
<feature type="binding site" evidence="1">
    <location>
        <position position="241"/>
    </location>
    <ligand>
        <name>ATP</name>
        <dbReference type="ChEBI" id="CHEBI:30616"/>
        <label>1</label>
    </ligand>
</feature>
<feature type="binding site" evidence="1">
    <location>
        <position position="242"/>
    </location>
    <ligand>
        <name>ATP</name>
        <dbReference type="ChEBI" id="CHEBI:30616"/>
        <label>1</label>
    </ligand>
</feature>
<feature type="binding site" evidence="1">
    <location>
        <position position="243"/>
    </location>
    <ligand>
        <name>ATP</name>
        <dbReference type="ChEBI" id="CHEBI:30616"/>
        <label>1</label>
    </ligand>
</feature>
<feature type="binding site" evidence="1">
    <location>
        <position position="284"/>
    </location>
    <ligand>
        <name>ATP</name>
        <dbReference type="ChEBI" id="CHEBI:30616"/>
        <label>1</label>
    </ligand>
</feature>
<feature type="binding site" evidence="1">
    <location>
        <position position="284"/>
    </location>
    <ligand>
        <name>Mg(2+)</name>
        <dbReference type="ChEBI" id="CHEBI:18420"/>
        <label>1</label>
    </ligand>
</feature>
<feature type="binding site" evidence="1">
    <location>
        <position position="284"/>
    </location>
    <ligand>
        <name>Mn(2+)</name>
        <dbReference type="ChEBI" id="CHEBI:29035"/>
        <label>1</label>
    </ligand>
</feature>
<feature type="binding site" evidence="1">
    <location>
        <position position="298"/>
    </location>
    <ligand>
        <name>ATP</name>
        <dbReference type="ChEBI" id="CHEBI:30616"/>
        <label>1</label>
    </ligand>
</feature>
<feature type="binding site" evidence="1">
    <location>
        <position position="298"/>
    </location>
    <ligand>
        <name>Mg(2+)</name>
        <dbReference type="ChEBI" id="CHEBI:18420"/>
        <label>1</label>
    </ligand>
</feature>
<feature type="binding site" evidence="1">
    <location>
        <position position="298"/>
    </location>
    <ligand>
        <name>Mg(2+)</name>
        <dbReference type="ChEBI" id="CHEBI:18420"/>
        <label>2</label>
    </ligand>
</feature>
<feature type="binding site" evidence="1">
    <location>
        <position position="298"/>
    </location>
    <ligand>
        <name>Mn(2+)</name>
        <dbReference type="ChEBI" id="CHEBI:29035"/>
        <label>1</label>
    </ligand>
</feature>
<feature type="binding site" evidence="1">
    <location>
        <position position="298"/>
    </location>
    <ligand>
        <name>Mn(2+)</name>
        <dbReference type="ChEBI" id="CHEBI:29035"/>
        <label>2</label>
    </ligand>
</feature>
<feature type="binding site" evidence="1">
    <location>
        <position position="300"/>
    </location>
    <ligand>
        <name>Mg(2+)</name>
        <dbReference type="ChEBI" id="CHEBI:18420"/>
        <label>2</label>
    </ligand>
</feature>
<feature type="binding site" evidence="1">
    <location>
        <position position="300"/>
    </location>
    <ligand>
        <name>Mn(2+)</name>
        <dbReference type="ChEBI" id="CHEBI:29035"/>
        <label>2</label>
    </ligand>
</feature>
<feature type="binding site" evidence="1">
    <location>
        <position position="707"/>
    </location>
    <ligand>
        <name>ATP</name>
        <dbReference type="ChEBI" id="CHEBI:30616"/>
        <label>2</label>
    </ligand>
</feature>
<feature type="binding site" evidence="1">
    <location>
        <position position="746"/>
    </location>
    <ligand>
        <name>ATP</name>
        <dbReference type="ChEBI" id="CHEBI:30616"/>
        <label>2</label>
    </ligand>
</feature>
<feature type="binding site" evidence="1">
    <location>
        <position position="748"/>
    </location>
    <ligand>
        <name>ATP</name>
        <dbReference type="ChEBI" id="CHEBI:30616"/>
        <label>2</label>
    </ligand>
</feature>
<feature type="binding site" evidence="1">
    <location>
        <position position="752"/>
    </location>
    <ligand>
        <name>ATP</name>
        <dbReference type="ChEBI" id="CHEBI:30616"/>
        <label>2</label>
    </ligand>
</feature>
<feature type="binding site" evidence="1">
    <location>
        <position position="777"/>
    </location>
    <ligand>
        <name>ATP</name>
        <dbReference type="ChEBI" id="CHEBI:30616"/>
        <label>2</label>
    </ligand>
</feature>
<feature type="binding site" evidence="1">
    <location>
        <position position="778"/>
    </location>
    <ligand>
        <name>ATP</name>
        <dbReference type="ChEBI" id="CHEBI:30616"/>
        <label>2</label>
    </ligand>
</feature>
<feature type="binding site" evidence="1">
    <location>
        <position position="779"/>
    </location>
    <ligand>
        <name>ATP</name>
        <dbReference type="ChEBI" id="CHEBI:30616"/>
        <label>2</label>
    </ligand>
</feature>
<feature type="binding site" evidence="1">
    <location>
        <position position="780"/>
    </location>
    <ligand>
        <name>ATP</name>
        <dbReference type="ChEBI" id="CHEBI:30616"/>
        <label>2</label>
    </ligand>
</feature>
<feature type="binding site" evidence="1">
    <location>
        <position position="820"/>
    </location>
    <ligand>
        <name>ATP</name>
        <dbReference type="ChEBI" id="CHEBI:30616"/>
        <label>2</label>
    </ligand>
</feature>
<feature type="binding site" evidence="1">
    <location>
        <position position="820"/>
    </location>
    <ligand>
        <name>Mg(2+)</name>
        <dbReference type="ChEBI" id="CHEBI:18420"/>
        <label>3</label>
    </ligand>
</feature>
<feature type="binding site" evidence="1">
    <location>
        <position position="820"/>
    </location>
    <ligand>
        <name>Mn(2+)</name>
        <dbReference type="ChEBI" id="CHEBI:29035"/>
        <label>3</label>
    </ligand>
</feature>
<feature type="binding site" evidence="1">
    <location>
        <position position="832"/>
    </location>
    <ligand>
        <name>ATP</name>
        <dbReference type="ChEBI" id="CHEBI:30616"/>
        <label>2</label>
    </ligand>
</feature>
<feature type="binding site" evidence="1">
    <location>
        <position position="832"/>
    </location>
    <ligand>
        <name>Mg(2+)</name>
        <dbReference type="ChEBI" id="CHEBI:18420"/>
        <label>3</label>
    </ligand>
</feature>
<feature type="binding site" evidence="1">
    <location>
        <position position="832"/>
    </location>
    <ligand>
        <name>Mg(2+)</name>
        <dbReference type="ChEBI" id="CHEBI:18420"/>
        <label>4</label>
    </ligand>
</feature>
<feature type="binding site" evidence="1">
    <location>
        <position position="832"/>
    </location>
    <ligand>
        <name>Mn(2+)</name>
        <dbReference type="ChEBI" id="CHEBI:29035"/>
        <label>3</label>
    </ligand>
</feature>
<feature type="binding site" evidence="1">
    <location>
        <position position="832"/>
    </location>
    <ligand>
        <name>Mn(2+)</name>
        <dbReference type="ChEBI" id="CHEBI:29035"/>
        <label>4</label>
    </ligand>
</feature>
<feature type="binding site" evidence="1">
    <location>
        <position position="834"/>
    </location>
    <ligand>
        <name>Mg(2+)</name>
        <dbReference type="ChEBI" id="CHEBI:18420"/>
        <label>4</label>
    </ligand>
</feature>
<feature type="binding site" evidence="1">
    <location>
        <position position="834"/>
    </location>
    <ligand>
        <name>Mn(2+)</name>
        <dbReference type="ChEBI" id="CHEBI:29035"/>
        <label>4</label>
    </ligand>
</feature>
<name>CARB_THEPX</name>
<reference key="1">
    <citation type="submission" date="2008-01" db="EMBL/GenBank/DDBJ databases">
        <title>Complete sequence of Thermoanaerobacter sp. X514.</title>
        <authorList>
            <consortium name="US DOE Joint Genome Institute"/>
            <person name="Copeland A."/>
            <person name="Lucas S."/>
            <person name="Lapidus A."/>
            <person name="Barry K."/>
            <person name="Glavina del Rio T."/>
            <person name="Dalin E."/>
            <person name="Tice H."/>
            <person name="Pitluck S."/>
            <person name="Bruce D."/>
            <person name="Goodwin L."/>
            <person name="Saunders E."/>
            <person name="Brettin T."/>
            <person name="Detter J.C."/>
            <person name="Han C."/>
            <person name="Schmutz J."/>
            <person name="Larimer F."/>
            <person name="Land M."/>
            <person name="Hauser L."/>
            <person name="Kyrpides N."/>
            <person name="Kim E."/>
            <person name="Hemme C."/>
            <person name="Fields M.W."/>
            <person name="He Z."/>
            <person name="Zhou J."/>
            <person name="Richardson P."/>
        </authorList>
    </citation>
    <scope>NUCLEOTIDE SEQUENCE [LARGE SCALE GENOMIC DNA]</scope>
    <source>
        <strain>X514</strain>
    </source>
</reference>
<protein>
    <recommendedName>
        <fullName evidence="1">Carbamoyl phosphate synthase large chain</fullName>
        <ecNumber evidence="1">6.3.4.16</ecNumber>
        <ecNumber evidence="1">6.3.5.5</ecNumber>
    </recommendedName>
    <alternativeName>
        <fullName evidence="1">Carbamoyl phosphate synthetase ammonia chain</fullName>
    </alternativeName>
</protein>
<keyword id="KW-0028">Amino-acid biosynthesis</keyword>
<keyword id="KW-0055">Arginine biosynthesis</keyword>
<keyword id="KW-0067">ATP-binding</keyword>
<keyword id="KW-0436">Ligase</keyword>
<keyword id="KW-0460">Magnesium</keyword>
<keyword id="KW-0464">Manganese</keyword>
<keyword id="KW-0479">Metal-binding</keyword>
<keyword id="KW-0547">Nucleotide-binding</keyword>
<keyword id="KW-0665">Pyrimidine biosynthesis</keyword>
<keyword id="KW-0677">Repeat</keyword>
<proteinExistence type="inferred from homology"/>